<protein>
    <recommendedName>
        <fullName evidence="1">GTPase Era</fullName>
    </recommendedName>
</protein>
<comment type="function">
    <text evidence="1">An essential GTPase that binds both GDP and GTP, with rapid nucleotide exchange. Plays a role in 16S rRNA processing and 30S ribosomal subunit biogenesis and possibly also in cell cycle regulation and energy metabolism.</text>
</comment>
<comment type="subunit">
    <text evidence="1">Monomer.</text>
</comment>
<comment type="subcellular location">
    <subcellularLocation>
        <location>Cytoplasm</location>
    </subcellularLocation>
    <subcellularLocation>
        <location evidence="1">Cell membrane</location>
        <topology evidence="1">Peripheral membrane protein</topology>
    </subcellularLocation>
</comment>
<comment type="similarity">
    <text evidence="1 2">Belongs to the TRAFAC class TrmE-Era-EngA-EngB-Septin-like GTPase superfamily. Era GTPase family.</text>
</comment>
<proteinExistence type="inferred from homology"/>
<evidence type="ECO:0000255" key="1">
    <source>
        <dbReference type="HAMAP-Rule" id="MF_00367"/>
    </source>
</evidence>
<evidence type="ECO:0000255" key="2">
    <source>
        <dbReference type="PROSITE-ProRule" id="PRU01050"/>
    </source>
</evidence>
<dbReference type="EMBL" id="AL766852">
    <property type="protein sequence ID" value="CAD47219.1"/>
    <property type="molecule type" value="Genomic_DNA"/>
</dbReference>
<dbReference type="RefSeq" id="WP_000143288.1">
    <property type="nucleotide sequence ID" value="NC_004368.1"/>
</dbReference>
<dbReference type="SMR" id="Q8E443"/>
<dbReference type="KEGG" id="san:gbs1560"/>
<dbReference type="eggNOG" id="COG1159">
    <property type="taxonomic scope" value="Bacteria"/>
</dbReference>
<dbReference type="HOGENOM" id="CLU_038009_1_0_9"/>
<dbReference type="Proteomes" id="UP000000823">
    <property type="component" value="Chromosome"/>
</dbReference>
<dbReference type="GO" id="GO:0005829">
    <property type="term" value="C:cytosol"/>
    <property type="evidence" value="ECO:0007669"/>
    <property type="project" value="TreeGrafter"/>
</dbReference>
<dbReference type="GO" id="GO:0005886">
    <property type="term" value="C:plasma membrane"/>
    <property type="evidence" value="ECO:0007669"/>
    <property type="project" value="UniProtKB-SubCell"/>
</dbReference>
<dbReference type="GO" id="GO:0005525">
    <property type="term" value="F:GTP binding"/>
    <property type="evidence" value="ECO:0007669"/>
    <property type="project" value="UniProtKB-UniRule"/>
</dbReference>
<dbReference type="GO" id="GO:0003924">
    <property type="term" value="F:GTPase activity"/>
    <property type="evidence" value="ECO:0007669"/>
    <property type="project" value="UniProtKB-UniRule"/>
</dbReference>
<dbReference type="GO" id="GO:0043024">
    <property type="term" value="F:ribosomal small subunit binding"/>
    <property type="evidence" value="ECO:0007669"/>
    <property type="project" value="TreeGrafter"/>
</dbReference>
<dbReference type="GO" id="GO:0070181">
    <property type="term" value="F:small ribosomal subunit rRNA binding"/>
    <property type="evidence" value="ECO:0007669"/>
    <property type="project" value="UniProtKB-UniRule"/>
</dbReference>
<dbReference type="GO" id="GO:0000028">
    <property type="term" value="P:ribosomal small subunit assembly"/>
    <property type="evidence" value="ECO:0007669"/>
    <property type="project" value="TreeGrafter"/>
</dbReference>
<dbReference type="CDD" id="cd04163">
    <property type="entry name" value="Era"/>
    <property type="match status" value="1"/>
</dbReference>
<dbReference type="CDD" id="cd22534">
    <property type="entry name" value="KH-II_Era"/>
    <property type="match status" value="1"/>
</dbReference>
<dbReference type="FunFam" id="3.30.300.20:FF:000003">
    <property type="entry name" value="GTPase Era"/>
    <property type="match status" value="1"/>
</dbReference>
<dbReference type="FunFam" id="3.40.50.300:FF:000094">
    <property type="entry name" value="GTPase Era"/>
    <property type="match status" value="1"/>
</dbReference>
<dbReference type="Gene3D" id="3.30.300.20">
    <property type="match status" value="1"/>
</dbReference>
<dbReference type="Gene3D" id="3.40.50.300">
    <property type="entry name" value="P-loop containing nucleotide triphosphate hydrolases"/>
    <property type="match status" value="1"/>
</dbReference>
<dbReference type="HAMAP" id="MF_00367">
    <property type="entry name" value="GTPase_Era"/>
    <property type="match status" value="1"/>
</dbReference>
<dbReference type="InterPro" id="IPR030388">
    <property type="entry name" value="G_ERA_dom"/>
</dbReference>
<dbReference type="InterPro" id="IPR006073">
    <property type="entry name" value="GTP-bd"/>
</dbReference>
<dbReference type="InterPro" id="IPR005662">
    <property type="entry name" value="GTPase_Era-like"/>
</dbReference>
<dbReference type="InterPro" id="IPR015946">
    <property type="entry name" value="KH_dom-like_a/b"/>
</dbReference>
<dbReference type="InterPro" id="IPR004044">
    <property type="entry name" value="KH_dom_type_2"/>
</dbReference>
<dbReference type="InterPro" id="IPR009019">
    <property type="entry name" value="KH_sf_prok-type"/>
</dbReference>
<dbReference type="InterPro" id="IPR027417">
    <property type="entry name" value="P-loop_NTPase"/>
</dbReference>
<dbReference type="InterPro" id="IPR005225">
    <property type="entry name" value="Small_GTP-bd"/>
</dbReference>
<dbReference type="NCBIfam" id="TIGR00436">
    <property type="entry name" value="era"/>
    <property type="match status" value="1"/>
</dbReference>
<dbReference type="NCBIfam" id="NF000908">
    <property type="entry name" value="PRK00089.1"/>
    <property type="match status" value="1"/>
</dbReference>
<dbReference type="NCBIfam" id="TIGR00231">
    <property type="entry name" value="small_GTP"/>
    <property type="match status" value="1"/>
</dbReference>
<dbReference type="PANTHER" id="PTHR42698">
    <property type="entry name" value="GTPASE ERA"/>
    <property type="match status" value="1"/>
</dbReference>
<dbReference type="PANTHER" id="PTHR42698:SF1">
    <property type="entry name" value="GTPASE ERA, MITOCHONDRIAL"/>
    <property type="match status" value="1"/>
</dbReference>
<dbReference type="Pfam" id="PF07650">
    <property type="entry name" value="KH_2"/>
    <property type="match status" value="1"/>
</dbReference>
<dbReference type="Pfam" id="PF01926">
    <property type="entry name" value="MMR_HSR1"/>
    <property type="match status" value="1"/>
</dbReference>
<dbReference type="SUPFAM" id="SSF52540">
    <property type="entry name" value="P-loop containing nucleoside triphosphate hydrolases"/>
    <property type="match status" value="1"/>
</dbReference>
<dbReference type="SUPFAM" id="SSF54814">
    <property type="entry name" value="Prokaryotic type KH domain (KH-domain type II)"/>
    <property type="match status" value="1"/>
</dbReference>
<dbReference type="PROSITE" id="PS51713">
    <property type="entry name" value="G_ERA"/>
    <property type="match status" value="1"/>
</dbReference>
<dbReference type="PROSITE" id="PS50823">
    <property type="entry name" value="KH_TYPE_2"/>
    <property type="match status" value="1"/>
</dbReference>
<accession>Q8E443</accession>
<feature type="chain" id="PRO_1000079748" description="GTPase Era">
    <location>
        <begin position="1"/>
        <end position="299"/>
    </location>
</feature>
<feature type="domain" description="Era-type G" evidence="2">
    <location>
        <begin position="4"/>
        <end position="171"/>
    </location>
</feature>
<feature type="domain" description="KH type-2" evidence="1">
    <location>
        <begin position="202"/>
        <end position="280"/>
    </location>
</feature>
<feature type="region of interest" description="G1" evidence="2">
    <location>
        <begin position="12"/>
        <end position="19"/>
    </location>
</feature>
<feature type="region of interest" description="G2" evidence="2">
    <location>
        <begin position="38"/>
        <end position="42"/>
    </location>
</feature>
<feature type="region of interest" description="G3" evidence="2">
    <location>
        <begin position="59"/>
        <end position="62"/>
    </location>
</feature>
<feature type="region of interest" description="G4" evidence="2">
    <location>
        <begin position="121"/>
        <end position="124"/>
    </location>
</feature>
<feature type="region of interest" description="G5" evidence="2">
    <location>
        <begin position="150"/>
        <end position="152"/>
    </location>
</feature>
<feature type="binding site" evidence="1">
    <location>
        <begin position="12"/>
        <end position="19"/>
    </location>
    <ligand>
        <name>GTP</name>
        <dbReference type="ChEBI" id="CHEBI:37565"/>
    </ligand>
</feature>
<feature type="binding site" evidence="1">
    <location>
        <begin position="59"/>
        <end position="63"/>
    </location>
    <ligand>
        <name>GTP</name>
        <dbReference type="ChEBI" id="CHEBI:37565"/>
    </ligand>
</feature>
<feature type="binding site" evidence="1">
    <location>
        <begin position="121"/>
        <end position="124"/>
    </location>
    <ligand>
        <name>GTP</name>
        <dbReference type="ChEBI" id="CHEBI:37565"/>
    </ligand>
</feature>
<sequence>MTFKSGFVAILGRPNVGKSTFLNHVMGQKIAIMSDKAQTTRNKIMGIYTTETEQIVFIDTPGIHKPKTALGDFMVESAYSTLREVETVLFMVPADEKRGKGDDMIIERLKAAKIPVILVINKIDKVHPDQLLEQIDDFRSQMDFKEVVPISALQGNNVPTLIKLLTDNLEEGFQYFPEDQITDHPERFLVSEMVREKVLHLTQQEVPHSVAVVVESMKRDEETDKVHIRATIMVERDSQKGIIIGKQGAMLKKIGKMARRDIELMLGDKVYLETWVKVKKNWRDKKLDLADFGYNEKEY</sequence>
<organism>
    <name type="scientific">Streptococcus agalactiae serotype III (strain NEM316)</name>
    <dbReference type="NCBI Taxonomy" id="211110"/>
    <lineage>
        <taxon>Bacteria</taxon>
        <taxon>Bacillati</taxon>
        <taxon>Bacillota</taxon>
        <taxon>Bacilli</taxon>
        <taxon>Lactobacillales</taxon>
        <taxon>Streptococcaceae</taxon>
        <taxon>Streptococcus</taxon>
    </lineage>
</organism>
<name>ERA_STRA3</name>
<keyword id="KW-1003">Cell membrane</keyword>
<keyword id="KW-0963">Cytoplasm</keyword>
<keyword id="KW-0342">GTP-binding</keyword>
<keyword id="KW-0472">Membrane</keyword>
<keyword id="KW-0547">Nucleotide-binding</keyword>
<keyword id="KW-0690">Ribosome biogenesis</keyword>
<keyword id="KW-0694">RNA-binding</keyword>
<keyword id="KW-0699">rRNA-binding</keyword>
<reference key="1">
    <citation type="journal article" date="2002" name="Mol. Microbiol.">
        <title>Genome sequence of Streptococcus agalactiae, a pathogen causing invasive neonatal disease.</title>
        <authorList>
            <person name="Glaser P."/>
            <person name="Rusniok C."/>
            <person name="Buchrieser C."/>
            <person name="Chevalier F."/>
            <person name="Frangeul L."/>
            <person name="Msadek T."/>
            <person name="Zouine M."/>
            <person name="Couve E."/>
            <person name="Lalioui L."/>
            <person name="Poyart C."/>
            <person name="Trieu-Cuot P."/>
            <person name="Kunst F."/>
        </authorList>
    </citation>
    <scope>NUCLEOTIDE SEQUENCE [LARGE SCALE GENOMIC DNA]</scope>
    <source>
        <strain>NEM316</strain>
    </source>
</reference>
<gene>
    <name evidence="1" type="primary">era</name>
    <name type="ordered locus">gbs1560</name>
</gene>